<keyword id="KW-0028">Amino-acid biosynthesis</keyword>
<keyword id="KW-0100">Branched-chain amino acid biosynthesis</keyword>
<keyword id="KW-0432">Leucine biosynthesis</keyword>
<keyword id="KW-0456">Lyase</keyword>
<accession>Q2RG99</accession>
<proteinExistence type="inferred from homology"/>
<comment type="function">
    <text evidence="1">Catalyzes the isomerization between 2-isopropylmalate and 3-isopropylmalate, via the formation of 2-isopropylmaleate.</text>
</comment>
<comment type="catalytic activity">
    <reaction evidence="1">
        <text>(2R,3S)-3-isopropylmalate = (2S)-2-isopropylmalate</text>
        <dbReference type="Rhea" id="RHEA:32287"/>
        <dbReference type="ChEBI" id="CHEBI:1178"/>
        <dbReference type="ChEBI" id="CHEBI:35121"/>
        <dbReference type="EC" id="4.2.1.33"/>
    </reaction>
</comment>
<comment type="pathway">
    <text evidence="1">Amino-acid biosynthesis; L-leucine biosynthesis; L-leucine from 3-methyl-2-oxobutanoate: step 2/4.</text>
</comment>
<comment type="subunit">
    <text evidence="1">Heterodimer of LeuC and LeuD.</text>
</comment>
<comment type="similarity">
    <text evidence="1">Belongs to the LeuD family. LeuD type 2 subfamily.</text>
</comment>
<protein>
    <recommendedName>
        <fullName evidence="1">3-isopropylmalate dehydratase small subunit</fullName>
        <ecNumber evidence="1">4.2.1.33</ecNumber>
    </recommendedName>
    <alternativeName>
        <fullName evidence="1">Alpha-IPM isomerase</fullName>
        <shortName evidence="1">IPMI</shortName>
    </alternativeName>
    <alternativeName>
        <fullName evidence="1">Isopropylmalate isomerase</fullName>
    </alternativeName>
</protein>
<reference key="1">
    <citation type="journal article" date="2008" name="Environ. Microbiol.">
        <title>The complete genome sequence of Moorella thermoacetica (f. Clostridium thermoaceticum).</title>
        <authorList>
            <person name="Pierce E."/>
            <person name="Xie G."/>
            <person name="Barabote R.D."/>
            <person name="Saunders E."/>
            <person name="Han C.S."/>
            <person name="Detter J.C."/>
            <person name="Richardson P."/>
            <person name="Brettin T.S."/>
            <person name="Das A."/>
            <person name="Ljungdahl L.G."/>
            <person name="Ragsdale S.W."/>
        </authorList>
    </citation>
    <scope>NUCLEOTIDE SEQUENCE [LARGE SCALE GENOMIC DNA]</scope>
    <source>
        <strain>ATCC 39073 / JCM 9320</strain>
    </source>
</reference>
<organism>
    <name type="scientific">Moorella thermoacetica (strain ATCC 39073 / JCM 9320)</name>
    <dbReference type="NCBI Taxonomy" id="264732"/>
    <lineage>
        <taxon>Bacteria</taxon>
        <taxon>Bacillati</taxon>
        <taxon>Bacillota</taxon>
        <taxon>Clostridia</taxon>
        <taxon>Moorellales</taxon>
        <taxon>Moorellaceae</taxon>
        <taxon>Moorella</taxon>
    </lineage>
</organism>
<name>LEUD_MOOTA</name>
<sequence length="166" mass="17516">MIIQGKCHTFGNDIDTDAIIPARYLNTTDPGELARHCMEDADPTFAGRVQKGEIIVAGKNFGCGSSREHAPVAIKAAGVAAVVAASFARIFYRNAINIGLPIFESPEAAAGIKAGDEVKIDAGKGEIVNLTRGETYPVAPFPPFMQELIAAGGLMPYVARKVKTSV</sequence>
<evidence type="ECO:0000255" key="1">
    <source>
        <dbReference type="HAMAP-Rule" id="MF_01032"/>
    </source>
</evidence>
<gene>
    <name evidence="1" type="primary">leuD</name>
    <name type="ordered locus">Moth_2253</name>
</gene>
<feature type="chain" id="PRO_1000072969" description="3-isopropylmalate dehydratase small subunit">
    <location>
        <begin position="1"/>
        <end position="166"/>
    </location>
</feature>
<dbReference type="EC" id="4.2.1.33" evidence="1"/>
<dbReference type="EMBL" id="CP000232">
    <property type="protein sequence ID" value="ABC20540.1"/>
    <property type="molecule type" value="Genomic_DNA"/>
</dbReference>
<dbReference type="RefSeq" id="YP_431083.1">
    <property type="nucleotide sequence ID" value="NC_007644.1"/>
</dbReference>
<dbReference type="SMR" id="Q2RG99"/>
<dbReference type="STRING" id="264732.Moth_2253"/>
<dbReference type="EnsemblBacteria" id="ABC20540">
    <property type="protein sequence ID" value="ABC20540"/>
    <property type="gene ID" value="Moth_2253"/>
</dbReference>
<dbReference type="KEGG" id="mta:Moth_2253"/>
<dbReference type="PATRIC" id="fig|264732.11.peg.2452"/>
<dbReference type="eggNOG" id="COG0066">
    <property type="taxonomic scope" value="Bacteria"/>
</dbReference>
<dbReference type="HOGENOM" id="CLU_081378_1_1_9"/>
<dbReference type="OrthoDB" id="9777465at2"/>
<dbReference type="UniPathway" id="UPA00048">
    <property type="reaction ID" value="UER00071"/>
</dbReference>
<dbReference type="GO" id="GO:0003861">
    <property type="term" value="F:3-isopropylmalate dehydratase activity"/>
    <property type="evidence" value="ECO:0007669"/>
    <property type="project" value="UniProtKB-UniRule"/>
</dbReference>
<dbReference type="GO" id="GO:0009098">
    <property type="term" value="P:L-leucine biosynthetic process"/>
    <property type="evidence" value="ECO:0007669"/>
    <property type="project" value="UniProtKB-UniRule"/>
</dbReference>
<dbReference type="FunFam" id="3.20.19.10:FF:000007">
    <property type="entry name" value="Isopropylmalate/citramalate isomerase small subunit"/>
    <property type="match status" value="1"/>
</dbReference>
<dbReference type="Gene3D" id="3.20.19.10">
    <property type="entry name" value="Aconitase, domain 4"/>
    <property type="match status" value="1"/>
</dbReference>
<dbReference type="HAMAP" id="MF_01032">
    <property type="entry name" value="LeuD_type2"/>
    <property type="match status" value="1"/>
</dbReference>
<dbReference type="InterPro" id="IPR015928">
    <property type="entry name" value="Aconitase/3IPM_dehydase_swvl"/>
</dbReference>
<dbReference type="InterPro" id="IPR000573">
    <property type="entry name" value="AconitaseA/IPMdHydase_ssu_swvl"/>
</dbReference>
<dbReference type="InterPro" id="IPR050075">
    <property type="entry name" value="LeuD"/>
</dbReference>
<dbReference type="InterPro" id="IPR011827">
    <property type="entry name" value="LeuD_type2/HacB/DmdB"/>
</dbReference>
<dbReference type="NCBIfam" id="TIGR02087">
    <property type="entry name" value="LEUD_arch"/>
    <property type="match status" value="1"/>
</dbReference>
<dbReference type="PANTHER" id="PTHR43345:SF2">
    <property type="entry name" value="3-ISOPROPYLMALATE DEHYDRATASE SMALL SUBUNIT 1"/>
    <property type="match status" value="1"/>
</dbReference>
<dbReference type="PANTHER" id="PTHR43345">
    <property type="entry name" value="3-ISOPROPYLMALATE DEHYDRATASE SMALL SUBUNIT 2-RELATED-RELATED"/>
    <property type="match status" value="1"/>
</dbReference>
<dbReference type="Pfam" id="PF00694">
    <property type="entry name" value="Aconitase_C"/>
    <property type="match status" value="1"/>
</dbReference>
<dbReference type="SUPFAM" id="SSF52016">
    <property type="entry name" value="LeuD/IlvD-like"/>
    <property type="match status" value="1"/>
</dbReference>